<comment type="function">
    <text evidence="1">Catalyzes the transfer of a ribosyl phosphate group from 5-phosphoribose 1-diphosphate to orotate, leading to the formation of orotidine monophosphate (OMP).</text>
</comment>
<comment type="catalytic activity">
    <reaction evidence="1">
        <text>orotidine 5'-phosphate + diphosphate = orotate + 5-phospho-alpha-D-ribose 1-diphosphate</text>
        <dbReference type="Rhea" id="RHEA:10380"/>
        <dbReference type="ChEBI" id="CHEBI:30839"/>
        <dbReference type="ChEBI" id="CHEBI:33019"/>
        <dbReference type="ChEBI" id="CHEBI:57538"/>
        <dbReference type="ChEBI" id="CHEBI:58017"/>
        <dbReference type="EC" id="2.4.2.10"/>
    </reaction>
</comment>
<comment type="cofactor">
    <cofactor evidence="1">
        <name>Mg(2+)</name>
        <dbReference type="ChEBI" id="CHEBI:18420"/>
    </cofactor>
</comment>
<comment type="pathway">
    <text evidence="1">Pyrimidine metabolism; UMP biosynthesis via de novo pathway; UMP from orotate: step 1/2.</text>
</comment>
<comment type="subunit">
    <text evidence="1">Homodimer.</text>
</comment>
<comment type="similarity">
    <text evidence="1">Belongs to the purine/pyrimidine phosphoribosyltransferase family. PyrE subfamily.</text>
</comment>
<evidence type="ECO:0000255" key="1">
    <source>
        <dbReference type="HAMAP-Rule" id="MF_01208"/>
    </source>
</evidence>
<feature type="chain" id="PRO_1000066231" description="Orotate phosphoribosyltransferase">
    <location>
        <begin position="1"/>
        <end position="213"/>
    </location>
</feature>
<feature type="binding site" description="in other chain" evidence="1">
    <location>
        <position position="26"/>
    </location>
    <ligand>
        <name>5-phospho-alpha-D-ribose 1-diphosphate</name>
        <dbReference type="ChEBI" id="CHEBI:58017"/>
        <note>ligand shared between dimeric partners</note>
    </ligand>
</feature>
<feature type="binding site" evidence="1">
    <location>
        <begin position="34"/>
        <end position="35"/>
    </location>
    <ligand>
        <name>orotate</name>
        <dbReference type="ChEBI" id="CHEBI:30839"/>
    </ligand>
</feature>
<feature type="binding site" description="in other chain" evidence="1">
    <location>
        <begin position="72"/>
        <end position="73"/>
    </location>
    <ligand>
        <name>5-phospho-alpha-D-ribose 1-diphosphate</name>
        <dbReference type="ChEBI" id="CHEBI:58017"/>
        <note>ligand shared between dimeric partners</note>
    </ligand>
</feature>
<feature type="binding site" evidence="1">
    <location>
        <position position="99"/>
    </location>
    <ligand>
        <name>5-phospho-alpha-D-ribose 1-diphosphate</name>
        <dbReference type="ChEBI" id="CHEBI:58017"/>
        <note>ligand shared between dimeric partners</note>
    </ligand>
</feature>
<feature type="binding site" description="in other chain" evidence="1">
    <location>
        <position position="100"/>
    </location>
    <ligand>
        <name>5-phospho-alpha-D-ribose 1-diphosphate</name>
        <dbReference type="ChEBI" id="CHEBI:58017"/>
        <note>ligand shared between dimeric partners</note>
    </ligand>
</feature>
<feature type="binding site" evidence="1">
    <location>
        <position position="103"/>
    </location>
    <ligand>
        <name>5-phospho-alpha-D-ribose 1-diphosphate</name>
        <dbReference type="ChEBI" id="CHEBI:58017"/>
        <note>ligand shared between dimeric partners</note>
    </ligand>
</feature>
<feature type="binding site" evidence="1">
    <location>
        <position position="105"/>
    </location>
    <ligand>
        <name>5-phospho-alpha-D-ribose 1-diphosphate</name>
        <dbReference type="ChEBI" id="CHEBI:58017"/>
        <note>ligand shared between dimeric partners</note>
    </ligand>
</feature>
<feature type="binding site" description="in other chain" evidence="1">
    <location>
        <begin position="124"/>
        <end position="132"/>
    </location>
    <ligand>
        <name>5-phospho-alpha-D-ribose 1-diphosphate</name>
        <dbReference type="ChEBI" id="CHEBI:58017"/>
        <note>ligand shared between dimeric partners</note>
    </ligand>
</feature>
<feature type="binding site" evidence="1">
    <location>
        <position position="128"/>
    </location>
    <ligand>
        <name>orotate</name>
        <dbReference type="ChEBI" id="CHEBI:30839"/>
    </ligand>
</feature>
<feature type="binding site" evidence="1">
    <location>
        <position position="156"/>
    </location>
    <ligand>
        <name>orotate</name>
        <dbReference type="ChEBI" id="CHEBI:30839"/>
    </ligand>
</feature>
<proteinExistence type="inferred from homology"/>
<organism>
    <name type="scientific">Cronobacter sakazakii (strain ATCC BAA-894)</name>
    <name type="common">Enterobacter sakazakii</name>
    <dbReference type="NCBI Taxonomy" id="290339"/>
    <lineage>
        <taxon>Bacteria</taxon>
        <taxon>Pseudomonadati</taxon>
        <taxon>Pseudomonadota</taxon>
        <taxon>Gammaproteobacteria</taxon>
        <taxon>Enterobacterales</taxon>
        <taxon>Enterobacteriaceae</taxon>
        <taxon>Cronobacter</taxon>
    </lineage>
</organism>
<dbReference type="EC" id="2.4.2.10" evidence="1"/>
<dbReference type="EMBL" id="CP000783">
    <property type="protein sequence ID" value="ABU79271.1"/>
    <property type="molecule type" value="Genomic_DNA"/>
</dbReference>
<dbReference type="RefSeq" id="WP_004388467.1">
    <property type="nucleotide sequence ID" value="NC_009778.1"/>
</dbReference>
<dbReference type="SMR" id="A7MQA9"/>
<dbReference type="KEGG" id="esa:ESA_04090"/>
<dbReference type="HOGENOM" id="CLU_074878_0_1_6"/>
<dbReference type="UniPathway" id="UPA00070">
    <property type="reaction ID" value="UER00119"/>
</dbReference>
<dbReference type="Proteomes" id="UP000000260">
    <property type="component" value="Chromosome"/>
</dbReference>
<dbReference type="GO" id="GO:0005737">
    <property type="term" value="C:cytoplasm"/>
    <property type="evidence" value="ECO:0007669"/>
    <property type="project" value="TreeGrafter"/>
</dbReference>
<dbReference type="GO" id="GO:0000287">
    <property type="term" value="F:magnesium ion binding"/>
    <property type="evidence" value="ECO:0007669"/>
    <property type="project" value="UniProtKB-UniRule"/>
</dbReference>
<dbReference type="GO" id="GO:0004588">
    <property type="term" value="F:orotate phosphoribosyltransferase activity"/>
    <property type="evidence" value="ECO:0007669"/>
    <property type="project" value="UniProtKB-UniRule"/>
</dbReference>
<dbReference type="GO" id="GO:0006207">
    <property type="term" value="P:'de novo' pyrimidine nucleobase biosynthetic process"/>
    <property type="evidence" value="ECO:0007669"/>
    <property type="project" value="TreeGrafter"/>
</dbReference>
<dbReference type="GO" id="GO:0044205">
    <property type="term" value="P:'de novo' UMP biosynthetic process"/>
    <property type="evidence" value="ECO:0007669"/>
    <property type="project" value="UniProtKB-UniRule"/>
</dbReference>
<dbReference type="GO" id="GO:0046132">
    <property type="term" value="P:pyrimidine ribonucleoside biosynthetic process"/>
    <property type="evidence" value="ECO:0007669"/>
    <property type="project" value="TreeGrafter"/>
</dbReference>
<dbReference type="CDD" id="cd06223">
    <property type="entry name" value="PRTases_typeI"/>
    <property type="match status" value="1"/>
</dbReference>
<dbReference type="FunFam" id="3.40.50.2020:FF:000008">
    <property type="entry name" value="Orotate phosphoribosyltransferase"/>
    <property type="match status" value="1"/>
</dbReference>
<dbReference type="Gene3D" id="3.40.50.2020">
    <property type="match status" value="1"/>
</dbReference>
<dbReference type="HAMAP" id="MF_01208">
    <property type="entry name" value="PyrE"/>
    <property type="match status" value="1"/>
</dbReference>
<dbReference type="InterPro" id="IPR023031">
    <property type="entry name" value="OPRT"/>
</dbReference>
<dbReference type="InterPro" id="IPR004467">
    <property type="entry name" value="Or_phspho_trans_dom"/>
</dbReference>
<dbReference type="InterPro" id="IPR000836">
    <property type="entry name" value="PRibTrfase_dom"/>
</dbReference>
<dbReference type="InterPro" id="IPR029057">
    <property type="entry name" value="PRTase-like"/>
</dbReference>
<dbReference type="NCBIfam" id="TIGR00336">
    <property type="entry name" value="pyrE"/>
    <property type="match status" value="1"/>
</dbReference>
<dbReference type="PANTHER" id="PTHR46683">
    <property type="entry name" value="OROTATE PHOSPHORIBOSYLTRANSFERASE 1-RELATED"/>
    <property type="match status" value="1"/>
</dbReference>
<dbReference type="PANTHER" id="PTHR46683:SF1">
    <property type="entry name" value="OROTATE PHOSPHORIBOSYLTRANSFERASE 1-RELATED"/>
    <property type="match status" value="1"/>
</dbReference>
<dbReference type="Pfam" id="PF00156">
    <property type="entry name" value="Pribosyltran"/>
    <property type="match status" value="1"/>
</dbReference>
<dbReference type="SUPFAM" id="SSF53271">
    <property type="entry name" value="PRTase-like"/>
    <property type="match status" value="1"/>
</dbReference>
<dbReference type="PROSITE" id="PS00103">
    <property type="entry name" value="PUR_PYR_PR_TRANSFER"/>
    <property type="match status" value="1"/>
</dbReference>
<protein>
    <recommendedName>
        <fullName evidence="1">Orotate phosphoribosyltransferase</fullName>
        <shortName evidence="1">OPRT</shortName>
        <shortName evidence="1">OPRTase</shortName>
        <ecNumber evidence="1">2.4.2.10</ecNumber>
    </recommendedName>
</protein>
<keyword id="KW-0328">Glycosyltransferase</keyword>
<keyword id="KW-0460">Magnesium</keyword>
<keyword id="KW-0665">Pyrimidine biosynthesis</keyword>
<keyword id="KW-1185">Reference proteome</keyword>
<keyword id="KW-0808">Transferase</keyword>
<reference key="1">
    <citation type="journal article" date="2010" name="PLoS ONE">
        <title>Genome sequence of Cronobacter sakazakii BAA-894 and comparative genomic hybridization analysis with other Cronobacter species.</title>
        <authorList>
            <person name="Kucerova E."/>
            <person name="Clifton S.W."/>
            <person name="Xia X.Q."/>
            <person name="Long F."/>
            <person name="Porwollik S."/>
            <person name="Fulton L."/>
            <person name="Fronick C."/>
            <person name="Minx P."/>
            <person name="Kyung K."/>
            <person name="Warren W."/>
            <person name="Fulton R."/>
            <person name="Feng D."/>
            <person name="Wollam A."/>
            <person name="Shah N."/>
            <person name="Bhonagiri V."/>
            <person name="Nash W.E."/>
            <person name="Hallsworth-Pepin K."/>
            <person name="Wilson R.K."/>
            <person name="McClelland M."/>
            <person name="Forsythe S.J."/>
        </authorList>
    </citation>
    <scope>NUCLEOTIDE SEQUENCE [LARGE SCALE GENOMIC DNA]</scope>
    <source>
        <strain>ATCC BAA-894</strain>
    </source>
</reference>
<gene>
    <name evidence="1" type="primary">pyrE</name>
    <name type="ordered locus">ESA_04090</name>
</gene>
<name>PYRE_CROS8</name>
<sequence length="213" mass="23508">MKPYQRQFIEFALNKQVLKFGEFTLKSGRQSPYFFNAGLFNTGRDLALLGRFYAEALVDSGVDFDLLFGPAYKGIPIATTTAVALAEHHERDVPYCFNRKEAKDHGEGGNLVGSPLQGRVMLVDDVITAGTAIRESMEIIQANGATLAGVMISLDRQERGRGELSAIQEVERDYGCQVIAIITLNDLIAYLAEKPEMANHLAAVEAYRQQYGV</sequence>
<accession>A7MQA9</accession>